<name>FCP1_SCHPO</name>
<gene>
    <name type="primary">fcp1</name>
    <name type="ORF">SPAC19B12.05c</name>
</gene>
<feature type="chain" id="PRO_0000212567" description="RNA polymerase II subunit A C-terminal domain phosphatase">
    <location>
        <begin position="1"/>
        <end position="723"/>
    </location>
</feature>
<feature type="domain" description="FCP1 homology" evidence="2">
    <location>
        <begin position="160"/>
        <end position="341"/>
    </location>
</feature>
<feature type="domain" description="BRCT" evidence="1">
    <location>
        <begin position="486"/>
        <end position="579"/>
    </location>
</feature>
<feature type="region of interest" description="Disordered" evidence="3">
    <location>
        <begin position="345"/>
        <end position="380"/>
    </location>
</feature>
<feature type="region of interest" description="Disordered" evidence="3">
    <location>
        <begin position="631"/>
        <end position="723"/>
    </location>
</feature>
<feature type="compositionally biased region" description="Acidic residues" evidence="3">
    <location>
        <begin position="352"/>
        <end position="366"/>
    </location>
</feature>
<feature type="compositionally biased region" description="Low complexity" evidence="3">
    <location>
        <begin position="367"/>
        <end position="379"/>
    </location>
</feature>
<feature type="compositionally biased region" description="Polar residues" evidence="3">
    <location>
        <begin position="639"/>
        <end position="650"/>
    </location>
</feature>
<feature type="compositionally biased region" description="Basic and acidic residues" evidence="3">
    <location>
        <begin position="673"/>
        <end position="687"/>
    </location>
</feature>
<feature type="compositionally biased region" description="Acidic residues" evidence="3">
    <location>
        <begin position="700"/>
        <end position="715"/>
    </location>
</feature>
<feature type="active site" evidence="4">
    <location>
        <position position="170"/>
    </location>
</feature>
<feature type="active site" evidence="4">
    <location>
        <position position="172"/>
    </location>
</feature>
<feature type="mutagenesis site" description="No activity." evidence="4">
    <original>D</original>
    <variation>A</variation>
    <variation>N</variation>
    <variation>E</variation>
    <location>
        <position position="170"/>
    </location>
</feature>
<feature type="mutagenesis site" description="No activity." evidence="4">
    <original>D</original>
    <variation>A</variation>
    <variation>N</variation>
    <variation>E</variation>
    <location>
        <position position="172"/>
    </location>
</feature>
<feature type="helix" evidence="8">
    <location>
        <begin position="151"/>
        <end position="162"/>
    </location>
</feature>
<feature type="strand" evidence="8">
    <location>
        <begin position="165"/>
        <end position="169"/>
    </location>
</feature>
<feature type="turn" evidence="8">
    <location>
        <begin position="172"/>
        <end position="174"/>
    </location>
</feature>
<feature type="strand" evidence="8">
    <location>
        <begin position="175"/>
        <end position="179"/>
    </location>
</feature>
<feature type="helix" evidence="8">
    <location>
        <begin position="183"/>
        <end position="188"/>
    </location>
</feature>
<feature type="turn" evidence="8">
    <location>
        <begin position="194"/>
        <end position="196"/>
    </location>
</feature>
<feature type="helix" evidence="8">
    <location>
        <begin position="197"/>
        <end position="199"/>
    </location>
</feature>
<feature type="strand" evidence="8">
    <location>
        <begin position="203"/>
        <end position="209"/>
    </location>
</feature>
<feature type="turn" evidence="8">
    <location>
        <begin position="210"/>
        <end position="213"/>
    </location>
</feature>
<feature type="strand" evidence="8">
    <location>
        <begin position="214"/>
        <end position="222"/>
    </location>
</feature>
<feature type="helix" evidence="8">
    <location>
        <begin position="226"/>
        <end position="234"/>
    </location>
</feature>
<feature type="strand" evidence="8">
    <location>
        <begin position="237"/>
        <end position="242"/>
    </location>
</feature>
<feature type="helix" evidence="8">
    <location>
        <begin position="247"/>
        <end position="257"/>
    </location>
</feature>
<feature type="turn" evidence="8">
    <location>
        <begin position="262"/>
        <end position="266"/>
    </location>
</feature>
<feature type="turn" evidence="8">
    <location>
        <begin position="271"/>
        <end position="273"/>
    </location>
</feature>
<feature type="helix" evidence="8">
    <location>
        <begin position="282"/>
        <end position="284"/>
    </location>
</feature>
<feature type="strand" evidence="8">
    <location>
        <begin position="293"/>
        <end position="298"/>
    </location>
</feature>
<feature type="helix" evidence="8">
    <location>
        <begin position="301"/>
        <end position="303"/>
    </location>
</feature>
<feature type="strand" evidence="8">
    <location>
        <begin position="309"/>
        <end position="311"/>
    </location>
</feature>
<feature type="turn" evidence="8">
    <location>
        <begin position="327"/>
        <end position="329"/>
    </location>
</feature>
<feature type="helix" evidence="8">
    <location>
        <begin position="398"/>
        <end position="415"/>
    </location>
</feature>
<feature type="helix" evidence="8">
    <location>
        <begin position="417"/>
        <end position="427"/>
    </location>
</feature>
<feature type="helix" evidence="6">
    <location>
        <begin position="434"/>
        <end position="436"/>
    </location>
</feature>
<feature type="helix" evidence="8">
    <location>
        <begin position="445"/>
        <end position="470"/>
    </location>
</feature>
<feature type="turn" evidence="8">
    <location>
        <begin position="471"/>
        <end position="473"/>
    </location>
</feature>
<feature type="helix" evidence="8">
    <location>
        <begin position="479"/>
        <end position="488"/>
    </location>
</feature>
<feature type="strand" evidence="8">
    <location>
        <begin position="495"/>
        <end position="502"/>
    </location>
</feature>
<feature type="turn" evidence="6">
    <location>
        <begin position="508"/>
        <end position="510"/>
    </location>
</feature>
<feature type="helix" evidence="8">
    <location>
        <begin position="512"/>
        <end position="519"/>
    </location>
</feature>
<feature type="strand" evidence="8">
    <location>
        <begin position="526"/>
        <end position="530"/>
    </location>
</feature>
<feature type="strand" evidence="8">
    <location>
        <begin position="533"/>
        <end position="538"/>
    </location>
</feature>
<feature type="strand" evidence="9">
    <location>
        <begin position="540"/>
        <end position="542"/>
    </location>
</feature>
<feature type="helix" evidence="8">
    <location>
        <begin position="543"/>
        <end position="551"/>
    </location>
</feature>
<feature type="strand" evidence="8">
    <location>
        <begin position="555"/>
        <end position="557"/>
    </location>
</feature>
<feature type="helix" evidence="8">
    <location>
        <begin position="559"/>
        <end position="568"/>
    </location>
</feature>
<feature type="helix" evidence="8">
    <location>
        <begin position="574"/>
        <end position="577"/>
    </location>
</feature>
<feature type="strand" evidence="7">
    <location>
        <begin position="578"/>
        <end position="580"/>
    </location>
</feature>
<comment type="function">
    <text evidence="4">Processively dephosphorylates 'Ser-2' and 'Ser-5' of the heptad repeats YSPTSPS in the C-terminal domain of the largest RNA polymerase II subunit. This promotes the activity of RNA polymerase II.</text>
</comment>
<comment type="catalytic activity">
    <reaction evidence="4">
        <text>O-phospho-L-seryl-[protein] + H2O = L-seryl-[protein] + phosphate</text>
        <dbReference type="Rhea" id="RHEA:20629"/>
        <dbReference type="Rhea" id="RHEA-COMP:9863"/>
        <dbReference type="Rhea" id="RHEA-COMP:11604"/>
        <dbReference type="ChEBI" id="CHEBI:15377"/>
        <dbReference type="ChEBI" id="CHEBI:29999"/>
        <dbReference type="ChEBI" id="CHEBI:43474"/>
        <dbReference type="ChEBI" id="CHEBI:83421"/>
        <dbReference type="EC" id="3.1.3.16"/>
    </reaction>
</comment>
<comment type="catalytic activity">
    <reaction evidence="4">
        <text>O-phospho-L-threonyl-[protein] + H2O = L-threonyl-[protein] + phosphate</text>
        <dbReference type="Rhea" id="RHEA:47004"/>
        <dbReference type="Rhea" id="RHEA-COMP:11060"/>
        <dbReference type="Rhea" id="RHEA-COMP:11605"/>
        <dbReference type="ChEBI" id="CHEBI:15377"/>
        <dbReference type="ChEBI" id="CHEBI:30013"/>
        <dbReference type="ChEBI" id="CHEBI:43474"/>
        <dbReference type="ChEBI" id="CHEBI:61977"/>
        <dbReference type="EC" id="3.1.3.16"/>
    </reaction>
</comment>
<comment type="cofactor">
    <cofactor evidence="4">
        <name>Mg(2+)</name>
        <dbReference type="ChEBI" id="CHEBI:18420"/>
    </cofactor>
    <cofactor evidence="4">
        <name>Mn(2+)</name>
        <dbReference type="ChEBI" id="CHEBI:29035"/>
    </cofactor>
    <cofactor evidence="4">
        <name>Co(2+)</name>
        <dbReference type="ChEBI" id="CHEBI:48828"/>
    </cofactor>
</comment>
<comment type="subunit">
    <text evidence="4">Monomer.</text>
</comment>
<comment type="subcellular location">
    <subcellularLocation>
        <location evidence="5">Nucleus</location>
    </subcellularLocation>
</comment>
<evidence type="ECO:0000255" key="1">
    <source>
        <dbReference type="PROSITE-ProRule" id="PRU00033"/>
    </source>
</evidence>
<evidence type="ECO:0000255" key="2">
    <source>
        <dbReference type="PROSITE-ProRule" id="PRU00336"/>
    </source>
</evidence>
<evidence type="ECO:0000256" key="3">
    <source>
        <dbReference type="SAM" id="MobiDB-lite"/>
    </source>
</evidence>
<evidence type="ECO:0000269" key="4">
    <source>
    </source>
</evidence>
<evidence type="ECO:0000305" key="5"/>
<evidence type="ECO:0007829" key="6">
    <source>
        <dbReference type="PDB" id="3EF0"/>
    </source>
</evidence>
<evidence type="ECO:0007829" key="7">
    <source>
        <dbReference type="PDB" id="3EF1"/>
    </source>
</evidence>
<evidence type="ECO:0007829" key="8">
    <source>
        <dbReference type="PDB" id="4XPZ"/>
    </source>
</evidence>
<evidence type="ECO:0007829" key="9">
    <source>
        <dbReference type="PDB" id="4XQ0"/>
    </source>
</evidence>
<sequence length="723" mass="81965">MSKRLTPIHLPNSLNYPIEIASCLVPQGSYVKKGTPLLLYRFFTKVKEDQEDGSEVYVDREFVEQFECPVEGELVEWAVKKEESIENFSKIVAKLHEPCTHEVNYGGLCAICGKNITSQDYMGYSDMARANISMTHNTGDLTVSLEEASRLESENVKRLRQEKRLSLIVDLDQTIIHATVDPTVGEWMSDPGNVNYDVLRDVRSFNLQEGPSGYTSCYYIKFRPGLAQFLQKISELYELHIYTMGTKAYAKEVAKIIDPTGKLFQDRVLSRDDSGSLAQKSLRRLFPCDTSMVVVIDDRGDVWDWNPNLIKVVPYEFFVGIGDINSNFLAKSTPLPEQEQLIPLEIPKDEPDSVDEINEENEETPEYDSSNSSYAQDSSTIPEKTLLKDTFLQNREALEEQNKERVTALELQKSERPLAKQQNALLEDEGKPTPSHTLLHNRDHELERLEKVLKDIHAVYYEEENDISSRSGNHKHANVGLIIPKMKQKVLKGCRLLFSGVIPLGVDVLSSDIAKWAMSFGAEVVLDFSVPPTHLIAAKIRTEKVKKAVSMGNIKVVKLNWLTESLSQWKRLPESDYLLYPSYDLPDRNLSEHSYSSSSDDEQRISELNDRELDEIDWQAADQDVENALKDLSDDNDFDTGSISASQSQPEALEVNTPIKRKADLIQPSYNYDGEKRRKENDNHEGYDLLPNSSTKGEESAENENELDDLADIMEAELSKDTA</sequence>
<accession>Q9P376</accession>
<protein>
    <recommendedName>
        <fullName>RNA polymerase II subunit A C-terminal domain phosphatase</fullName>
        <ecNumber>3.1.3.16</ecNumber>
    </recommendedName>
    <alternativeName>
        <fullName>CTD phosphatase fcp1</fullName>
    </alternativeName>
</protein>
<reference key="1">
    <citation type="journal article" date="2002" name="Nature">
        <title>The genome sequence of Schizosaccharomyces pombe.</title>
        <authorList>
            <person name="Wood V."/>
            <person name="Gwilliam R."/>
            <person name="Rajandream M.A."/>
            <person name="Lyne M.H."/>
            <person name="Lyne R."/>
            <person name="Stewart A."/>
            <person name="Sgouros J.G."/>
            <person name="Peat N."/>
            <person name="Hayles J."/>
            <person name="Baker S.G."/>
            <person name="Basham D."/>
            <person name="Bowman S."/>
            <person name="Brooks K."/>
            <person name="Brown D."/>
            <person name="Brown S."/>
            <person name="Chillingworth T."/>
            <person name="Churcher C.M."/>
            <person name="Collins M."/>
            <person name="Connor R."/>
            <person name="Cronin A."/>
            <person name="Davis P."/>
            <person name="Feltwell T."/>
            <person name="Fraser A."/>
            <person name="Gentles S."/>
            <person name="Goble A."/>
            <person name="Hamlin N."/>
            <person name="Harris D.E."/>
            <person name="Hidalgo J."/>
            <person name="Hodgson G."/>
            <person name="Holroyd S."/>
            <person name="Hornsby T."/>
            <person name="Howarth S."/>
            <person name="Huckle E.J."/>
            <person name="Hunt S."/>
            <person name="Jagels K."/>
            <person name="James K.D."/>
            <person name="Jones L."/>
            <person name="Jones M."/>
            <person name="Leather S."/>
            <person name="McDonald S."/>
            <person name="McLean J."/>
            <person name="Mooney P."/>
            <person name="Moule S."/>
            <person name="Mungall K.L."/>
            <person name="Murphy L.D."/>
            <person name="Niblett D."/>
            <person name="Odell C."/>
            <person name="Oliver K."/>
            <person name="O'Neil S."/>
            <person name="Pearson D."/>
            <person name="Quail M.A."/>
            <person name="Rabbinowitsch E."/>
            <person name="Rutherford K.M."/>
            <person name="Rutter S."/>
            <person name="Saunders D."/>
            <person name="Seeger K."/>
            <person name="Sharp S."/>
            <person name="Skelton J."/>
            <person name="Simmonds M.N."/>
            <person name="Squares R."/>
            <person name="Squares S."/>
            <person name="Stevens K."/>
            <person name="Taylor K."/>
            <person name="Taylor R.G."/>
            <person name="Tivey A."/>
            <person name="Walsh S.V."/>
            <person name="Warren T."/>
            <person name="Whitehead S."/>
            <person name="Woodward J.R."/>
            <person name="Volckaert G."/>
            <person name="Aert R."/>
            <person name="Robben J."/>
            <person name="Grymonprez B."/>
            <person name="Weltjens I."/>
            <person name="Vanstreels E."/>
            <person name="Rieger M."/>
            <person name="Schaefer M."/>
            <person name="Mueller-Auer S."/>
            <person name="Gabel C."/>
            <person name="Fuchs M."/>
            <person name="Duesterhoeft A."/>
            <person name="Fritzc C."/>
            <person name="Holzer E."/>
            <person name="Moestl D."/>
            <person name="Hilbert H."/>
            <person name="Borzym K."/>
            <person name="Langer I."/>
            <person name="Beck A."/>
            <person name="Lehrach H."/>
            <person name="Reinhardt R."/>
            <person name="Pohl T.M."/>
            <person name="Eger P."/>
            <person name="Zimmermann W."/>
            <person name="Wedler H."/>
            <person name="Wambutt R."/>
            <person name="Purnelle B."/>
            <person name="Goffeau A."/>
            <person name="Cadieu E."/>
            <person name="Dreano S."/>
            <person name="Gloux S."/>
            <person name="Lelaure V."/>
            <person name="Mottier S."/>
            <person name="Galibert F."/>
            <person name="Aves S.J."/>
            <person name="Xiang Z."/>
            <person name="Hunt C."/>
            <person name="Moore K."/>
            <person name="Hurst S.M."/>
            <person name="Lucas M."/>
            <person name="Rochet M."/>
            <person name="Gaillardin C."/>
            <person name="Tallada V.A."/>
            <person name="Garzon A."/>
            <person name="Thode G."/>
            <person name="Daga R.R."/>
            <person name="Cruzado L."/>
            <person name="Jimenez J."/>
            <person name="Sanchez M."/>
            <person name="del Rey F."/>
            <person name="Benito J."/>
            <person name="Dominguez A."/>
            <person name="Revuelta J.L."/>
            <person name="Moreno S."/>
            <person name="Armstrong J."/>
            <person name="Forsburg S.L."/>
            <person name="Cerutti L."/>
            <person name="Lowe T."/>
            <person name="McCombie W.R."/>
            <person name="Paulsen I."/>
            <person name="Potashkin J."/>
            <person name="Shpakovski G.V."/>
            <person name="Ussery D."/>
            <person name="Barrell B.G."/>
            <person name="Nurse P."/>
        </authorList>
    </citation>
    <scope>NUCLEOTIDE SEQUENCE [LARGE SCALE GENOMIC DNA]</scope>
    <source>
        <strain>972 / ATCC 24843</strain>
    </source>
</reference>
<reference key="2">
    <citation type="journal article" date="2002" name="J. Biol. Chem.">
        <title>Characterization of the CTD phosphatase Fcp1 from fission yeast. Preferential dephosphorylation of serine 2 versus serine 5.</title>
        <authorList>
            <person name="Hausmann S."/>
            <person name="Shuman S."/>
        </authorList>
    </citation>
    <scope>FUNCTION</scope>
    <scope>COFACTOR</scope>
    <scope>SUBUNIT</scope>
    <scope>CATALYTIC ACTIVITY</scope>
    <scope>ACTIVE SITE</scope>
    <scope>MUTAGENESIS OF ASP-170 AND ASP-172</scope>
</reference>
<dbReference type="EC" id="3.1.3.16"/>
<dbReference type="EMBL" id="CU329670">
    <property type="protein sequence ID" value="CAC00553.1"/>
    <property type="molecule type" value="Genomic_DNA"/>
</dbReference>
<dbReference type="RefSeq" id="NP_594768.1">
    <property type="nucleotide sequence ID" value="NM_001020195.2"/>
</dbReference>
<dbReference type="PDB" id="3EF0">
    <property type="method" value="X-ray"/>
    <property type="resolution" value="2.10 A"/>
    <property type="chains" value="A=149-329, A=394-580"/>
</dbReference>
<dbReference type="PDB" id="3EF1">
    <property type="method" value="X-ray"/>
    <property type="resolution" value="2.15 A"/>
    <property type="chains" value="A=140-580"/>
</dbReference>
<dbReference type="PDB" id="4XPZ">
    <property type="method" value="X-ray"/>
    <property type="resolution" value="1.45 A"/>
    <property type="chains" value="A=149-329, A=394-580"/>
</dbReference>
<dbReference type="PDB" id="4XQ0">
    <property type="method" value="X-ray"/>
    <property type="resolution" value="1.85 A"/>
    <property type="chains" value="A=149-329, A=394-580"/>
</dbReference>
<dbReference type="PDBsum" id="3EF0"/>
<dbReference type="PDBsum" id="3EF1"/>
<dbReference type="PDBsum" id="4XPZ"/>
<dbReference type="PDBsum" id="4XQ0"/>
<dbReference type="SMR" id="Q9P376"/>
<dbReference type="BioGRID" id="278698">
    <property type="interactions" value="17"/>
</dbReference>
<dbReference type="FunCoup" id="Q9P376">
    <property type="interactions" value="363"/>
</dbReference>
<dbReference type="STRING" id="284812.Q9P376"/>
<dbReference type="iPTMnet" id="Q9P376"/>
<dbReference type="PaxDb" id="4896-SPAC19B12.05c.1"/>
<dbReference type="EnsemblFungi" id="SPAC19B12.05c.1">
    <property type="protein sequence ID" value="SPAC19B12.05c.1:pep"/>
    <property type="gene ID" value="SPAC19B12.05c"/>
</dbReference>
<dbReference type="GeneID" id="2542225"/>
<dbReference type="KEGG" id="spo:2542225"/>
<dbReference type="PomBase" id="SPAC19B12.05c">
    <property type="gene designation" value="fcp1"/>
</dbReference>
<dbReference type="VEuPathDB" id="FungiDB:SPAC19B12.05c"/>
<dbReference type="eggNOG" id="KOG0323">
    <property type="taxonomic scope" value="Eukaryota"/>
</dbReference>
<dbReference type="HOGENOM" id="CLU_007683_0_0_1"/>
<dbReference type="InParanoid" id="Q9P376"/>
<dbReference type="OMA" id="DQTVIHC"/>
<dbReference type="PhylomeDB" id="Q9P376"/>
<dbReference type="Reactome" id="R-SPO-113418">
    <property type="pathway name" value="Formation of the Early Elongation Complex"/>
</dbReference>
<dbReference type="Reactome" id="R-SPO-674695">
    <property type="pathway name" value="RNA Polymerase II Pre-transcription Events"/>
</dbReference>
<dbReference type="Reactome" id="R-SPO-6796648">
    <property type="pathway name" value="TP53 Regulates Transcription of DNA Repair Genes"/>
</dbReference>
<dbReference type="EvolutionaryTrace" id="Q9P376"/>
<dbReference type="PRO" id="PR:Q9P376"/>
<dbReference type="Proteomes" id="UP000002485">
    <property type="component" value="Chromosome I"/>
</dbReference>
<dbReference type="GO" id="GO:0005634">
    <property type="term" value="C:nucleus"/>
    <property type="evidence" value="ECO:0000314"/>
    <property type="project" value="PomBase"/>
</dbReference>
<dbReference type="GO" id="GO:0046872">
    <property type="term" value="F:metal ion binding"/>
    <property type="evidence" value="ECO:0007669"/>
    <property type="project" value="UniProtKB-KW"/>
</dbReference>
<dbReference type="GO" id="GO:0008420">
    <property type="term" value="F:RNA polymerase II CTD heptapeptide repeat phosphatase activity"/>
    <property type="evidence" value="ECO:0000314"/>
    <property type="project" value="PomBase"/>
</dbReference>
<dbReference type="GO" id="GO:0023052">
    <property type="term" value="P:signaling"/>
    <property type="evidence" value="ECO:0000303"/>
    <property type="project" value="PomBase"/>
</dbReference>
<dbReference type="CDD" id="cd17729">
    <property type="entry name" value="BRCT_CTDP1"/>
    <property type="match status" value="1"/>
</dbReference>
<dbReference type="CDD" id="cd07521">
    <property type="entry name" value="HAD_FCP1-like"/>
    <property type="match status" value="1"/>
</dbReference>
<dbReference type="FunFam" id="3.40.50.1000:FF:000308">
    <property type="entry name" value="Related to FCP1-TFIIF interacting component of CTD phosphatase"/>
    <property type="match status" value="1"/>
</dbReference>
<dbReference type="FunFam" id="3.40.50.10190:FF:000049">
    <property type="entry name" value="RNA Polymerase II CTD phosphatase Fcp1"/>
    <property type="match status" value="1"/>
</dbReference>
<dbReference type="Gene3D" id="3.40.50.10190">
    <property type="entry name" value="BRCT domain"/>
    <property type="match status" value="1"/>
</dbReference>
<dbReference type="Gene3D" id="3.40.50.1000">
    <property type="entry name" value="HAD superfamily/HAD-like"/>
    <property type="match status" value="1"/>
</dbReference>
<dbReference type="Gene3D" id="1.10.287.10">
    <property type="entry name" value="S15/NS1, RNA-binding"/>
    <property type="match status" value="2"/>
</dbReference>
<dbReference type="InterPro" id="IPR001357">
    <property type="entry name" value="BRCT_dom"/>
</dbReference>
<dbReference type="InterPro" id="IPR036420">
    <property type="entry name" value="BRCT_dom_sf"/>
</dbReference>
<dbReference type="InterPro" id="IPR039189">
    <property type="entry name" value="Fcp1"/>
</dbReference>
<dbReference type="InterPro" id="IPR004274">
    <property type="entry name" value="FCP1_dom"/>
</dbReference>
<dbReference type="InterPro" id="IPR011947">
    <property type="entry name" value="FCP1_euk"/>
</dbReference>
<dbReference type="InterPro" id="IPR036412">
    <property type="entry name" value="HAD-like_sf"/>
</dbReference>
<dbReference type="InterPro" id="IPR023214">
    <property type="entry name" value="HAD_sf"/>
</dbReference>
<dbReference type="InterPro" id="IPR040078">
    <property type="entry name" value="RNA_Pol_CTD_Phosphatase"/>
</dbReference>
<dbReference type="NCBIfam" id="TIGR02250">
    <property type="entry name" value="FCP1_euk"/>
    <property type="match status" value="1"/>
</dbReference>
<dbReference type="PANTHER" id="PTHR23081">
    <property type="entry name" value="RNA POLYMERASE II CTD PHOSPHATASE"/>
    <property type="match status" value="1"/>
</dbReference>
<dbReference type="PANTHER" id="PTHR23081:SF36">
    <property type="entry name" value="RNA POLYMERASE II SUBUNIT A C-TERMINAL DOMAIN PHOSPHATASE"/>
    <property type="match status" value="1"/>
</dbReference>
<dbReference type="Pfam" id="PF03031">
    <property type="entry name" value="NIF"/>
    <property type="match status" value="1"/>
</dbReference>
<dbReference type="Pfam" id="PF12738">
    <property type="entry name" value="PTCB-BRCT"/>
    <property type="match status" value="1"/>
</dbReference>
<dbReference type="SFLD" id="SFLDG01124">
    <property type="entry name" value="C0.1:_RNA_Pol_CTD_Phosphatase"/>
    <property type="match status" value="1"/>
</dbReference>
<dbReference type="SFLD" id="SFLDS00003">
    <property type="entry name" value="Haloacid_Dehalogenase"/>
    <property type="match status" value="1"/>
</dbReference>
<dbReference type="SMART" id="SM00577">
    <property type="entry name" value="CPDc"/>
    <property type="match status" value="1"/>
</dbReference>
<dbReference type="SUPFAM" id="SSF52113">
    <property type="entry name" value="BRCT domain"/>
    <property type="match status" value="1"/>
</dbReference>
<dbReference type="SUPFAM" id="SSF56784">
    <property type="entry name" value="HAD-like"/>
    <property type="match status" value="1"/>
</dbReference>
<dbReference type="PROSITE" id="PS50172">
    <property type="entry name" value="BRCT"/>
    <property type="match status" value="1"/>
</dbReference>
<dbReference type="PROSITE" id="PS50969">
    <property type="entry name" value="FCP1"/>
    <property type="match status" value="1"/>
</dbReference>
<organism>
    <name type="scientific">Schizosaccharomyces pombe (strain 972 / ATCC 24843)</name>
    <name type="common">Fission yeast</name>
    <dbReference type="NCBI Taxonomy" id="284812"/>
    <lineage>
        <taxon>Eukaryota</taxon>
        <taxon>Fungi</taxon>
        <taxon>Dikarya</taxon>
        <taxon>Ascomycota</taxon>
        <taxon>Taphrinomycotina</taxon>
        <taxon>Schizosaccharomycetes</taxon>
        <taxon>Schizosaccharomycetales</taxon>
        <taxon>Schizosaccharomycetaceae</taxon>
        <taxon>Schizosaccharomyces</taxon>
    </lineage>
</organism>
<proteinExistence type="evidence at protein level"/>
<keyword id="KW-0002">3D-structure</keyword>
<keyword id="KW-0170">Cobalt</keyword>
<keyword id="KW-0378">Hydrolase</keyword>
<keyword id="KW-0460">Magnesium</keyword>
<keyword id="KW-0464">Manganese</keyword>
<keyword id="KW-0479">Metal-binding</keyword>
<keyword id="KW-0539">Nucleus</keyword>
<keyword id="KW-0904">Protein phosphatase</keyword>
<keyword id="KW-1185">Reference proteome</keyword>